<comment type="function">
    <text evidence="3 6">Constitutive component of kinetochores that is essential for proper cell division during mitotic cell cycle (Probable). May play a role in the modulation of centromere during meiosis (PubMed:21695238).</text>
</comment>
<comment type="subcellular location">
    <subcellularLocation>
        <location evidence="2 3">Chromosome</location>
        <location evidence="2 3">Centromere</location>
        <location evidence="2 3">Kinetochore</location>
    </subcellularLocation>
    <text evidence="2 3">Localizes at centromeric regions throughout the mitotic cell cycle. Co-localizes with CENH3 during the cell cycle, from interphase to anaphase (PubMed:16331414). Localized at centromeres in meiotic cells (PubMed:21695238).</text>
</comment>
<comment type="disruption phenotype">
    <text evidence="2">Embryonic lethality when homozygous.</text>
</comment>
<comment type="similarity">
    <text evidence="5">Belongs to the mis12 family.</text>
</comment>
<comment type="sequence caution" evidence="5">
    <conflict type="erroneous gene model prediction">
        <sequence resource="EMBL-CDS" id="BAB08711"/>
    </conflict>
</comment>
<name>MIS12_ARATH</name>
<evidence type="ECO:0000255" key="1"/>
<evidence type="ECO:0000269" key="2">
    <source>
    </source>
</evidence>
<evidence type="ECO:0000269" key="3">
    <source>
    </source>
</evidence>
<evidence type="ECO:0000303" key="4">
    <source>
    </source>
</evidence>
<evidence type="ECO:0000305" key="5"/>
<evidence type="ECO:0000305" key="6">
    <source>
    </source>
</evidence>
<evidence type="ECO:0000312" key="7">
    <source>
        <dbReference type="Araport" id="AT5G35520"/>
    </source>
</evidence>
<evidence type="ECO:0000312" key="8">
    <source>
        <dbReference type="EMBL" id="BAB08711.1"/>
    </source>
</evidence>
<gene>
    <name evidence="4" type="primary">MIS12</name>
    <name evidence="7" type="ordered locus">At5g35520</name>
    <name evidence="8" type="ORF">MOK9.12</name>
</gene>
<sequence length="238" mass="27126">MEGSKSEAVFDSMNLNPQIFINEAINSVEDYVDQAFDFYARDASKSLKIKGSDKQKSQALSNGIARVRGLLLSVIDNRLKLWESYSLRFCFAVPDGFVLPKSEESSSVHQDGLYDLELDAELDSLRDKLNVVGKRSVELDSELQALERSSVSRERSLRLVNEALELYDESSMDEIFKEMTKMASELRASVERLKTRRMKASESAKVKRLKNHGKEFSAMTFDGKLEDLEKFQAELRKM</sequence>
<proteinExistence type="inferred from homology"/>
<protein>
    <recommendedName>
        <fullName evidence="5">Protein MIS12 homolog</fullName>
    </recommendedName>
    <alternativeName>
        <fullName>Protein MINICHROMOSOME INSTABILITY 12</fullName>
        <shortName>AtMIS12</shortName>
        <shortName>Protein MIS12-LIKE</shortName>
    </alternativeName>
</protein>
<accession>Q2V0Z5</accession>
<accession>Q9FJA7</accession>
<feature type="chain" id="PRO_0000435852" description="Protein MIS12 homolog">
    <location>
        <begin position="1"/>
        <end position="238"/>
    </location>
</feature>
<feature type="coiled-coil region" evidence="1">
    <location>
        <begin position="117"/>
        <end position="149"/>
    </location>
</feature>
<dbReference type="EMBL" id="AB205161">
    <property type="protein sequence ID" value="BAE66672.1"/>
    <property type="molecule type" value="Genomic_DNA"/>
</dbReference>
<dbReference type="EMBL" id="AB015477">
    <property type="protein sequence ID" value="BAB08711.1"/>
    <property type="status" value="ALT_SEQ"/>
    <property type="molecule type" value="Genomic_DNA"/>
</dbReference>
<dbReference type="EMBL" id="CP002688">
    <property type="protein sequence ID" value="AED93975.1"/>
    <property type="molecule type" value="Genomic_DNA"/>
</dbReference>
<dbReference type="RefSeq" id="NP_198402.2">
    <property type="nucleotide sequence ID" value="NM_122943.3"/>
</dbReference>
<dbReference type="SMR" id="Q2V0Z5"/>
<dbReference type="FunCoup" id="Q2V0Z5">
    <property type="interactions" value="539"/>
</dbReference>
<dbReference type="STRING" id="3702.Q2V0Z5"/>
<dbReference type="PaxDb" id="3702-AT5G35520.1"/>
<dbReference type="ProteomicsDB" id="250708"/>
<dbReference type="EnsemblPlants" id="AT5G35520.1">
    <property type="protein sequence ID" value="AT5G35520.1"/>
    <property type="gene ID" value="AT5G35520"/>
</dbReference>
<dbReference type="GeneID" id="833516"/>
<dbReference type="Gramene" id="AT5G35520.1">
    <property type="protein sequence ID" value="AT5G35520.1"/>
    <property type="gene ID" value="AT5G35520"/>
</dbReference>
<dbReference type="KEGG" id="ath:AT5G35520"/>
<dbReference type="Araport" id="AT5G35520"/>
<dbReference type="TAIR" id="AT5G35520">
    <property type="gene designation" value="MIS12"/>
</dbReference>
<dbReference type="eggNOG" id="ENOG502QVA6">
    <property type="taxonomic scope" value="Eukaryota"/>
</dbReference>
<dbReference type="HOGENOM" id="CLU_101939_0_0_1"/>
<dbReference type="InParanoid" id="Q2V0Z5"/>
<dbReference type="OMA" id="QNAICDP"/>
<dbReference type="OrthoDB" id="1884855at2759"/>
<dbReference type="PRO" id="PR:Q2V0Z5"/>
<dbReference type="Proteomes" id="UP000006548">
    <property type="component" value="Chromosome 5"/>
</dbReference>
<dbReference type="ExpressionAtlas" id="Q2V0Z5">
    <property type="expression patterns" value="baseline and differential"/>
</dbReference>
<dbReference type="GO" id="GO:0000775">
    <property type="term" value="C:chromosome, centromeric region"/>
    <property type="evidence" value="ECO:0000314"/>
    <property type="project" value="UniProtKB"/>
</dbReference>
<dbReference type="GO" id="GO:0000444">
    <property type="term" value="C:MIS12/MIND type complex"/>
    <property type="evidence" value="ECO:0000250"/>
    <property type="project" value="UniProtKB"/>
</dbReference>
<dbReference type="GO" id="GO:0005634">
    <property type="term" value="C:nucleus"/>
    <property type="evidence" value="ECO:0000314"/>
    <property type="project" value="TAIR"/>
</dbReference>
<dbReference type="GO" id="GO:0051301">
    <property type="term" value="P:cell division"/>
    <property type="evidence" value="ECO:0007669"/>
    <property type="project" value="UniProtKB-KW"/>
</dbReference>
<dbReference type="GO" id="GO:0051321">
    <property type="term" value="P:meiotic cell cycle"/>
    <property type="evidence" value="ECO:0007669"/>
    <property type="project" value="UniProtKB-KW"/>
</dbReference>
<dbReference type="GO" id="GO:0000278">
    <property type="term" value="P:mitotic cell cycle"/>
    <property type="evidence" value="ECO:0007669"/>
    <property type="project" value="InterPro"/>
</dbReference>
<dbReference type="InterPro" id="IPR008685">
    <property type="entry name" value="Centromere_Mis12"/>
</dbReference>
<dbReference type="PANTHER" id="PTHR14527">
    <property type="entry name" value="PROTEIN MIS12 HOMOLOG"/>
    <property type="match status" value="1"/>
</dbReference>
<dbReference type="PANTHER" id="PTHR14527:SF2">
    <property type="entry name" value="PROTEIN MIS12 HOMOLOG"/>
    <property type="match status" value="1"/>
</dbReference>
<dbReference type="Pfam" id="PF05859">
    <property type="entry name" value="Mis12"/>
    <property type="match status" value="1"/>
</dbReference>
<reference key="1">
    <citation type="journal article" date="2005" name="Chromosome Res.">
        <title>Characterization of a Mis12 homologue in Arabidopsis thaliana.</title>
        <authorList>
            <person name="Sato H."/>
            <person name="Shibata F."/>
            <person name="Murata M."/>
        </authorList>
    </citation>
    <scope>NUCLEOTIDE SEQUENCE [GENOMIC DNA]</scope>
    <scope>FUNCTION</scope>
    <scope>SUBCELLULAR LOCATION</scope>
    <scope>DISRUPTION PHENOTYPE</scope>
    <source>
        <strain>cv. Columbia</strain>
    </source>
</reference>
<reference key="2">
    <citation type="journal article" date="1998" name="DNA Res.">
        <title>Structural analysis of Arabidopsis thaliana chromosome 5. VII. Sequence features of the regions of 1,013,767 bp covered by sixteen physically assigned P1 and TAC clones.</title>
        <authorList>
            <person name="Nakamura Y."/>
            <person name="Sato S."/>
            <person name="Asamizu E."/>
            <person name="Kaneko T."/>
            <person name="Kotani H."/>
            <person name="Miyajima N."/>
            <person name="Tabata S."/>
        </authorList>
    </citation>
    <scope>NUCLEOTIDE SEQUENCE [LARGE SCALE GENOMIC DNA]</scope>
    <source>
        <strain>cv. Columbia</strain>
    </source>
</reference>
<reference key="3">
    <citation type="journal article" date="2017" name="Plant J.">
        <title>Araport11: a complete reannotation of the Arabidopsis thaliana reference genome.</title>
        <authorList>
            <person name="Cheng C.Y."/>
            <person name="Krishnakumar V."/>
            <person name="Chan A.P."/>
            <person name="Thibaud-Nissen F."/>
            <person name="Schobel S."/>
            <person name="Town C.D."/>
        </authorList>
    </citation>
    <scope>GENOME REANNOTATION</scope>
    <source>
        <strain>cv. Columbia</strain>
    </source>
</reference>
<reference key="4">
    <citation type="journal article" date="2011" name="PLoS Genet.">
        <title>Meiosis-specific loading of the centromere-specific histone CENH3 in Arabidopsis thaliana.</title>
        <authorList>
            <person name="Ravi M."/>
            <person name="Shibata F."/>
            <person name="Ramahi J.S."/>
            <person name="Nagaki K."/>
            <person name="Chen C."/>
            <person name="Murata M."/>
            <person name="Chan S.W."/>
        </authorList>
    </citation>
    <scope>FUNCTION</scope>
    <scope>SUBCELLULAR LOCATION</scope>
</reference>
<keyword id="KW-0131">Cell cycle</keyword>
<keyword id="KW-0132">Cell division</keyword>
<keyword id="KW-0137">Centromere</keyword>
<keyword id="KW-0158">Chromosome</keyword>
<keyword id="KW-0175">Coiled coil</keyword>
<keyword id="KW-0995">Kinetochore</keyword>
<keyword id="KW-0469">Meiosis</keyword>
<keyword id="KW-0498">Mitosis</keyword>
<keyword id="KW-1185">Reference proteome</keyword>
<organism>
    <name type="scientific">Arabidopsis thaliana</name>
    <name type="common">Mouse-ear cress</name>
    <dbReference type="NCBI Taxonomy" id="3702"/>
    <lineage>
        <taxon>Eukaryota</taxon>
        <taxon>Viridiplantae</taxon>
        <taxon>Streptophyta</taxon>
        <taxon>Embryophyta</taxon>
        <taxon>Tracheophyta</taxon>
        <taxon>Spermatophyta</taxon>
        <taxon>Magnoliopsida</taxon>
        <taxon>eudicotyledons</taxon>
        <taxon>Gunneridae</taxon>
        <taxon>Pentapetalae</taxon>
        <taxon>rosids</taxon>
        <taxon>malvids</taxon>
        <taxon>Brassicales</taxon>
        <taxon>Brassicaceae</taxon>
        <taxon>Camelineae</taxon>
        <taxon>Arabidopsis</taxon>
    </lineage>
</organism>